<name>LOLB_VIBCH</name>
<organism>
    <name type="scientific">Vibrio cholerae serotype O1 (strain ATCC 39315 / El Tor Inaba N16961)</name>
    <dbReference type="NCBI Taxonomy" id="243277"/>
    <lineage>
        <taxon>Bacteria</taxon>
        <taxon>Pseudomonadati</taxon>
        <taxon>Pseudomonadota</taxon>
        <taxon>Gammaproteobacteria</taxon>
        <taxon>Vibrionales</taxon>
        <taxon>Vibrionaceae</taxon>
        <taxon>Vibrio</taxon>
    </lineage>
</organism>
<proteinExistence type="evidence at protein level"/>
<sequence length="205" mass="23619">MNALVRRLLPGLASLLLLAGCATAPLQPVNVQWQSHQVTLEQIQHYQLTGKLGYIAPDQRQSFNFQWQKSPQKLSLRLSNFLGQTVLNLQVDEQGARVETYDDQIYRDQDAQSLIRNLTGLDIPVEQLEDWILGLPTQATHYELNEQNTLATLTKLASTEEWHVEYQRYQAIEWQHQPIPLPDKLKLQQNKTSIQLVISQWTLLP</sequence>
<comment type="function">
    <text evidence="1">Plays a critical role in the incorporation of lipoproteins in the outer membrane after they are released by the LolA protein.</text>
</comment>
<comment type="subunit">
    <text evidence="1">Monomer.</text>
</comment>
<comment type="subcellular location">
    <subcellularLocation>
        <location evidence="1">Cell outer membrane</location>
        <topology evidence="1">Lipid-anchor</topology>
    </subcellularLocation>
</comment>
<comment type="similarity">
    <text evidence="3">Belongs to the LolB family.</text>
</comment>
<comment type="sequence caution" evidence="3">
    <conflict type="erroneous initiation">
        <sequence resource="EMBL-CDS" id="AAF95326"/>
    </conflict>
</comment>
<gene>
    <name type="primary">lolB</name>
    <name type="synonym">hemM</name>
    <name type="ordered locus">VC_2181</name>
</gene>
<evidence type="ECO:0000250" key="1"/>
<evidence type="ECO:0000255" key="2"/>
<evidence type="ECO:0000305" key="3"/>
<evidence type="ECO:0007829" key="4">
    <source>
        <dbReference type="PDB" id="8CM1"/>
    </source>
</evidence>
<keyword id="KW-0002">3D-structure</keyword>
<keyword id="KW-0998">Cell outer membrane</keyword>
<keyword id="KW-0143">Chaperone</keyword>
<keyword id="KW-0449">Lipoprotein</keyword>
<keyword id="KW-0472">Membrane</keyword>
<keyword id="KW-0564">Palmitate</keyword>
<keyword id="KW-0653">Protein transport</keyword>
<keyword id="KW-1185">Reference proteome</keyword>
<keyword id="KW-0732">Signal</keyword>
<keyword id="KW-0813">Transport</keyword>
<reference key="1">
    <citation type="submission" date="2000-01" db="EMBL/GenBank/DDBJ databases">
        <title>Cloning and characterization of hemA and hemM gene of Vibrio cholerae (Bengal strain).</title>
        <authorList>
            <person name="Ravichandran M."/>
            <person name="Lalitha P."/>
            <person name="Tang T.H."/>
            <person name="Chan Y.Y."/>
            <person name="Johari M.R."/>
            <person name="Zainuddin Z.F."/>
        </authorList>
    </citation>
    <scope>NUCLEOTIDE SEQUENCE [GENOMIC DNA]</scope>
    <source>
        <strain>Bengal</strain>
    </source>
</reference>
<reference key="2">
    <citation type="journal article" date="2000" name="Nature">
        <title>DNA sequence of both chromosomes of the cholera pathogen Vibrio cholerae.</title>
        <authorList>
            <person name="Heidelberg J.F."/>
            <person name="Eisen J.A."/>
            <person name="Nelson W.C."/>
            <person name="Clayton R.A."/>
            <person name="Gwinn M.L."/>
            <person name="Dodson R.J."/>
            <person name="Haft D.H."/>
            <person name="Hickey E.K."/>
            <person name="Peterson J.D."/>
            <person name="Umayam L.A."/>
            <person name="Gill S.R."/>
            <person name="Nelson K.E."/>
            <person name="Read T.D."/>
            <person name="Tettelin H."/>
            <person name="Richardson D.L."/>
            <person name="Ermolaeva M.D."/>
            <person name="Vamathevan J.J."/>
            <person name="Bass S."/>
            <person name="Qin H."/>
            <person name="Dragoi I."/>
            <person name="Sellers P."/>
            <person name="McDonald L.A."/>
            <person name="Utterback T.R."/>
            <person name="Fleischmann R.D."/>
            <person name="Nierman W.C."/>
            <person name="White O."/>
            <person name="Salzberg S.L."/>
            <person name="Smith H.O."/>
            <person name="Colwell R.R."/>
            <person name="Mekalanos J.J."/>
            <person name="Venter J.C."/>
            <person name="Fraser C.M."/>
        </authorList>
    </citation>
    <scope>NUCLEOTIDE SEQUENCE [LARGE SCALE GENOMIC DNA]</scope>
    <source>
        <strain>ATCC 39315 / El Tor Inaba N16961</strain>
    </source>
</reference>
<dbReference type="EMBL" id="AF227752">
    <property type="protein sequence ID" value="AAK00700.1"/>
    <property type="molecule type" value="Genomic_DNA"/>
</dbReference>
<dbReference type="EMBL" id="AE003852">
    <property type="protein sequence ID" value="AAF95326.1"/>
    <property type="status" value="ALT_INIT"/>
    <property type="molecule type" value="Genomic_DNA"/>
</dbReference>
<dbReference type="PIR" id="D82109">
    <property type="entry name" value="D82109"/>
</dbReference>
<dbReference type="RefSeq" id="NP_231812.1">
    <property type="nucleotide sequence ID" value="NC_002505.1"/>
</dbReference>
<dbReference type="RefSeq" id="WP_000993150.1">
    <property type="nucleotide sequence ID" value="NZ_LT906614.1"/>
</dbReference>
<dbReference type="PDB" id="8CM1">
    <property type="method" value="X-ray"/>
    <property type="resolution" value="1.46 A"/>
    <property type="chains" value="A=21-205"/>
</dbReference>
<dbReference type="PDBsum" id="8CM1"/>
<dbReference type="SMR" id="P57070"/>
<dbReference type="STRING" id="243277.VC_2181"/>
<dbReference type="DNASU" id="2613317"/>
<dbReference type="EnsemblBacteria" id="AAF95326">
    <property type="protein sequence ID" value="AAF95326"/>
    <property type="gene ID" value="VC_2181"/>
</dbReference>
<dbReference type="KEGG" id="vch:VC_2181"/>
<dbReference type="PATRIC" id="fig|243277.26.peg.2079"/>
<dbReference type="eggNOG" id="COG3017">
    <property type="taxonomic scope" value="Bacteria"/>
</dbReference>
<dbReference type="HOGENOM" id="CLU_092816_1_0_6"/>
<dbReference type="Proteomes" id="UP000000584">
    <property type="component" value="Chromosome 1"/>
</dbReference>
<dbReference type="GO" id="GO:0009279">
    <property type="term" value="C:cell outer membrane"/>
    <property type="evidence" value="ECO:0007669"/>
    <property type="project" value="UniProtKB-SubCell"/>
</dbReference>
<dbReference type="GO" id="GO:0044874">
    <property type="term" value="P:lipoprotein localization to outer membrane"/>
    <property type="evidence" value="ECO:0007669"/>
    <property type="project" value="UniProtKB-UniRule"/>
</dbReference>
<dbReference type="GO" id="GO:0015031">
    <property type="term" value="P:protein transport"/>
    <property type="evidence" value="ECO:0007669"/>
    <property type="project" value="UniProtKB-KW"/>
</dbReference>
<dbReference type="CDD" id="cd16326">
    <property type="entry name" value="LolB"/>
    <property type="match status" value="1"/>
</dbReference>
<dbReference type="Gene3D" id="2.50.20.10">
    <property type="entry name" value="Lipoprotein localisation LolA/LolB/LppX"/>
    <property type="match status" value="1"/>
</dbReference>
<dbReference type="HAMAP" id="MF_00233">
    <property type="entry name" value="LolB"/>
    <property type="match status" value="1"/>
</dbReference>
<dbReference type="InterPro" id="IPR029046">
    <property type="entry name" value="LolA/LolB/LppX"/>
</dbReference>
<dbReference type="InterPro" id="IPR004565">
    <property type="entry name" value="OM_lipoprot_LolB"/>
</dbReference>
<dbReference type="NCBIfam" id="TIGR00548">
    <property type="entry name" value="lolB"/>
    <property type="match status" value="1"/>
</dbReference>
<dbReference type="Pfam" id="PF03550">
    <property type="entry name" value="LolB"/>
    <property type="match status" value="1"/>
</dbReference>
<dbReference type="SUPFAM" id="SSF89392">
    <property type="entry name" value="Prokaryotic lipoproteins and lipoprotein localization factors"/>
    <property type="match status" value="1"/>
</dbReference>
<dbReference type="PROSITE" id="PS51257">
    <property type="entry name" value="PROKAR_LIPOPROTEIN"/>
    <property type="match status" value="1"/>
</dbReference>
<accession>P57070</accession>
<accession>Q9APZ3</accession>
<feature type="signal peptide" evidence="2">
    <location>
        <begin position="1"/>
        <end position="20"/>
    </location>
</feature>
<feature type="chain" id="PRO_0000018314" description="Outer-membrane lipoprotein LolB">
    <location>
        <begin position="21"/>
        <end position="205"/>
    </location>
</feature>
<feature type="lipid moiety-binding region" description="N-palmitoyl cysteine" evidence="2">
    <location>
        <position position="21"/>
    </location>
</feature>
<feature type="lipid moiety-binding region" description="S-diacylglycerol cysteine" evidence="2">
    <location>
        <position position="21"/>
    </location>
</feature>
<feature type="helix" evidence="4">
    <location>
        <begin position="31"/>
        <end position="41"/>
    </location>
</feature>
<feature type="strand" evidence="4">
    <location>
        <begin position="45"/>
        <end position="55"/>
    </location>
</feature>
<feature type="strand" evidence="4">
    <location>
        <begin position="60"/>
        <end position="70"/>
    </location>
</feature>
<feature type="strand" evidence="4">
    <location>
        <begin position="73"/>
        <end position="79"/>
    </location>
</feature>
<feature type="strand" evidence="4">
    <location>
        <begin position="85"/>
        <end position="92"/>
    </location>
</feature>
<feature type="strand" evidence="4">
    <location>
        <begin position="95"/>
        <end position="99"/>
    </location>
</feature>
<feature type="strand" evidence="4">
    <location>
        <begin position="105"/>
        <end position="109"/>
    </location>
</feature>
<feature type="helix" evidence="4">
    <location>
        <begin position="111"/>
        <end position="119"/>
    </location>
</feature>
<feature type="helix" evidence="4">
    <location>
        <begin position="125"/>
        <end position="131"/>
    </location>
</feature>
<feature type="turn" evidence="4">
    <location>
        <begin position="132"/>
        <end position="134"/>
    </location>
</feature>
<feature type="strand" evidence="4">
    <location>
        <begin position="141"/>
        <end position="144"/>
    </location>
</feature>
<feature type="strand" evidence="4">
    <location>
        <begin position="148"/>
        <end position="157"/>
    </location>
</feature>
<feature type="strand" evidence="4">
    <location>
        <begin position="160"/>
        <end position="174"/>
    </location>
</feature>
<feature type="strand" evidence="4">
    <location>
        <begin position="177"/>
        <end position="189"/>
    </location>
</feature>
<feature type="strand" evidence="4">
    <location>
        <begin position="192"/>
        <end position="203"/>
    </location>
</feature>
<protein>
    <recommendedName>
        <fullName>Outer-membrane lipoprotein LolB</fullName>
    </recommendedName>
</protein>